<protein>
    <recommendedName>
        <fullName>Sodium- and chloride-dependent taurine transporter</fullName>
    </recommendedName>
    <alternativeName>
        <fullName>Solute carrier family 6 member 6</fullName>
    </alternativeName>
</protein>
<sequence>MATKEKLQCLKDFHKDILKPSPGKSPGTRPEDEAEGKPPQREKWASRIDFVLSVAGGFVGLGNVWRFPYLCYKNGGGAFLIPYFIFLFGGGLPVFFLEVIIGQYTSEGGITCWEKICPLFAGIGYASIVIVSLLNIYYIIILAWAMYYLFQSFQSELPWAKCNHSWNTPHCLEDTLRRNRSLWISNSTANFTSPVTEFWERKVLSLSSGIDEPGALKWDLALCLLLVWLVCFFCIWKGVKSTGKVVYFTATFPFAMLLVLLVRGLTLPGAGAGIKFYLYPDISRLEDPQVWIDAGTQIFFSYAICLGAMTSLGSYNKYKYNSYRDCMLLGCLNSGTSFVSGFAIFSILGFMAQEQGVDIADVAESGPGLAFIAYPKAVTMMPLPTFWSILFFIMLLLLGLDSQFVEVEGQITSLVDLHPSLLRKGFHREIFIASICCVTYLLGLTMVTEGGMYVFQLFDYYAASGVCLLWVAFFECFAIAWIYGSDNFYDGIEDMIGYRPGPWMKYCWAVVTPLLCTGCFIFSLVKYVPLTYNKVYTYPTWAIGLGWCLALSSMVCVPLVMVIRLAQTEGPFLVRLKYLLTPREPNRWAVEHEGAMPYSSRMAVNNTLRKPTHIIVETMM</sequence>
<dbReference type="EMBL" id="AF260239">
    <property type="protein sequence ID" value="AAF76147.1"/>
    <property type="molecule type" value="mRNA"/>
</dbReference>
<dbReference type="RefSeq" id="NP_777035.1">
    <property type="nucleotide sequence ID" value="NM_174610.2"/>
</dbReference>
<dbReference type="SMR" id="Q9MZ34"/>
<dbReference type="FunCoup" id="Q9MZ34">
    <property type="interactions" value="121"/>
</dbReference>
<dbReference type="STRING" id="9913.ENSBTAP00000058992"/>
<dbReference type="GlyCosmos" id="Q9MZ34">
    <property type="glycosylation" value="4 sites, No reported glycans"/>
</dbReference>
<dbReference type="GlyGen" id="Q9MZ34">
    <property type="glycosylation" value="4 sites"/>
</dbReference>
<dbReference type="PaxDb" id="9913-ENSBTAP00000014720"/>
<dbReference type="GeneID" id="282366"/>
<dbReference type="KEGG" id="bta:282366"/>
<dbReference type="CTD" id="6533"/>
<dbReference type="eggNOG" id="KOG3660">
    <property type="taxonomic scope" value="Eukaryota"/>
</dbReference>
<dbReference type="InParanoid" id="Q9MZ34"/>
<dbReference type="OrthoDB" id="6581954at2759"/>
<dbReference type="Proteomes" id="UP000009136">
    <property type="component" value="Unplaced"/>
</dbReference>
<dbReference type="GO" id="GO:0042995">
    <property type="term" value="C:cell projection"/>
    <property type="evidence" value="ECO:0000318"/>
    <property type="project" value="GO_Central"/>
</dbReference>
<dbReference type="GO" id="GO:0005886">
    <property type="term" value="C:plasma membrane"/>
    <property type="evidence" value="ECO:0000318"/>
    <property type="project" value="GO_Central"/>
</dbReference>
<dbReference type="GO" id="GO:0005332">
    <property type="term" value="F:gamma-aminobutyric acid:sodium:chloride symporter activity"/>
    <property type="evidence" value="ECO:0000250"/>
    <property type="project" value="UniProtKB"/>
</dbReference>
<dbReference type="GO" id="GO:0005369">
    <property type="term" value="F:taurine:sodium symporter activity"/>
    <property type="evidence" value="ECO:0000314"/>
    <property type="project" value="UniProtKB"/>
</dbReference>
<dbReference type="GO" id="GO:0006865">
    <property type="term" value="P:amino acid transport"/>
    <property type="evidence" value="ECO:0000318"/>
    <property type="project" value="GO_Central"/>
</dbReference>
<dbReference type="GO" id="GO:0006836">
    <property type="term" value="P:neurotransmitter transport"/>
    <property type="evidence" value="ECO:0007669"/>
    <property type="project" value="UniProtKB-KW"/>
</dbReference>
<dbReference type="GO" id="GO:0035725">
    <property type="term" value="P:sodium ion transmembrane transport"/>
    <property type="evidence" value="ECO:0000318"/>
    <property type="project" value="GO_Central"/>
</dbReference>
<dbReference type="GO" id="GO:0015734">
    <property type="term" value="P:taurine transmembrane transport"/>
    <property type="evidence" value="ECO:0000318"/>
    <property type="project" value="GO_Central"/>
</dbReference>
<dbReference type="InterPro" id="IPR000175">
    <property type="entry name" value="Na/ntran_symport"/>
</dbReference>
<dbReference type="InterPro" id="IPR002434">
    <property type="entry name" value="Na/ntran_symport_taurine"/>
</dbReference>
<dbReference type="InterPro" id="IPR037272">
    <property type="entry name" value="SNS_sf"/>
</dbReference>
<dbReference type="PANTHER" id="PTHR11616:SF141">
    <property type="entry name" value="SODIUM- AND CHLORIDE-DEPENDENT TAURINE TRANSPORTER"/>
    <property type="match status" value="1"/>
</dbReference>
<dbReference type="PANTHER" id="PTHR11616">
    <property type="entry name" value="SODIUM/CHLORIDE DEPENDENT TRANSPORTER"/>
    <property type="match status" value="1"/>
</dbReference>
<dbReference type="Pfam" id="PF00209">
    <property type="entry name" value="SNF"/>
    <property type="match status" value="1"/>
</dbReference>
<dbReference type="PRINTS" id="PR00176">
    <property type="entry name" value="NANEUSMPORT"/>
</dbReference>
<dbReference type="PRINTS" id="PR01200">
    <property type="entry name" value="TAUTRANSPORT"/>
</dbReference>
<dbReference type="SUPFAM" id="SSF161070">
    <property type="entry name" value="SNF-like"/>
    <property type="match status" value="1"/>
</dbReference>
<dbReference type="PROSITE" id="PS00610">
    <property type="entry name" value="NA_NEUROTRAN_SYMP_1"/>
    <property type="match status" value="1"/>
</dbReference>
<dbReference type="PROSITE" id="PS00754">
    <property type="entry name" value="NA_NEUROTRAN_SYMP_2"/>
    <property type="match status" value="1"/>
</dbReference>
<dbReference type="PROSITE" id="PS50267">
    <property type="entry name" value="NA_NEUROTRAN_SYMP_3"/>
    <property type="match status" value="1"/>
</dbReference>
<keyword id="KW-1003">Cell membrane</keyword>
<keyword id="KW-0325">Glycoprotein</keyword>
<keyword id="KW-0472">Membrane</keyword>
<keyword id="KW-0532">Neurotransmitter transport</keyword>
<keyword id="KW-0597">Phosphoprotein</keyword>
<keyword id="KW-1185">Reference proteome</keyword>
<keyword id="KW-0769">Symport</keyword>
<keyword id="KW-0812">Transmembrane</keyword>
<keyword id="KW-1133">Transmembrane helix</keyword>
<keyword id="KW-0813">Transport</keyword>
<organism>
    <name type="scientific">Bos taurus</name>
    <name type="common">Bovine</name>
    <dbReference type="NCBI Taxonomy" id="9913"/>
    <lineage>
        <taxon>Eukaryota</taxon>
        <taxon>Metazoa</taxon>
        <taxon>Chordata</taxon>
        <taxon>Craniata</taxon>
        <taxon>Vertebrata</taxon>
        <taxon>Euteleostomi</taxon>
        <taxon>Mammalia</taxon>
        <taxon>Eutheria</taxon>
        <taxon>Laurasiatheria</taxon>
        <taxon>Artiodactyla</taxon>
        <taxon>Ruminantia</taxon>
        <taxon>Pecora</taxon>
        <taxon>Bovidae</taxon>
        <taxon>Bovinae</taxon>
        <taxon>Bos</taxon>
    </lineage>
</organism>
<gene>
    <name type="primary">SLC6A6</name>
</gene>
<proteinExistence type="evidence at protein level"/>
<name>SC6A6_BOVIN</name>
<feature type="chain" id="PRO_0000214765" description="Sodium- and chloride-dependent taurine transporter">
    <location>
        <begin position="1"/>
        <end position="620"/>
    </location>
</feature>
<feature type="topological domain" description="Cytoplasmic" evidence="4">
    <location>
        <begin position="1"/>
        <end position="49"/>
    </location>
</feature>
<feature type="transmembrane region" description="Helical; Name=1" evidence="4">
    <location>
        <begin position="50"/>
        <end position="70"/>
    </location>
</feature>
<feature type="transmembrane region" description="Helical; Name=2" evidence="4">
    <location>
        <begin position="78"/>
        <end position="97"/>
    </location>
</feature>
<feature type="transmembrane region" description="Helical; Name=3" evidence="4">
    <location>
        <begin position="122"/>
        <end position="142"/>
    </location>
</feature>
<feature type="topological domain" description="Extracellular" evidence="4">
    <location>
        <begin position="143"/>
        <end position="217"/>
    </location>
</feature>
<feature type="transmembrane region" description="Helical; Name=4" evidence="4">
    <location>
        <begin position="218"/>
        <end position="236"/>
    </location>
</feature>
<feature type="transmembrane region" description="Helical; Name=5" evidence="4">
    <location>
        <begin position="245"/>
        <end position="262"/>
    </location>
</feature>
<feature type="transmembrane region" description="Helical; Name=6" evidence="4">
    <location>
        <begin position="298"/>
        <end position="315"/>
    </location>
</feature>
<feature type="transmembrane region" description="Helical; Name=7" evidence="4">
    <location>
        <begin position="327"/>
        <end position="348"/>
    </location>
</feature>
<feature type="transmembrane region" description="Helical; Name=8" evidence="4">
    <location>
        <begin position="381"/>
        <end position="400"/>
    </location>
</feature>
<feature type="transmembrane region" description="Helical; Name=9" evidence="4">
    <location>
        <begin position="430"/>
        <end position="448"/>
    </location>
</feature>
<feature type="transmembrane region" description="Helical; Name=10" evidence="4">
    <location>
        <begin position="465"/>
        <end position="485"/>
    </location>
</feature>
<feature type="transmembrane region" description="Helical; Name=11" evidence="4">
    <location>
        <begin position="506"/>
        <end position="525"/>
    </location>
</feature>
<feature type="transmembrane region" description="Helical; Name=12" evidence="4">
    <location>
        <begin position="545"/>
        <end position="563"/>
    </location>
</feature>
<feature type="topological domain" description="Cytoplasmic" evidence="4">
    <location>
        <begin position="564"/>
        <end position="620"/>
    </location>
</feature>
<feature type="region of interest" description="Disordered" evidence="5">
    <location>
        <begin position="15"/>
        <end position="42"/>
    </location>
</feature>
<feature type="compositionally biased region" description="Basic and acidic residues" evidence="5">
    <location>
        <begin position="29"/>
        <end position="42"/>
    </location>
</feature>
<feature type="modified residue" description="Phosphoserine" evidence="3">
    <location>
        <position position="322"/>
    </location>
</feature>
<feature type="glycosylation site" description="N-linked (GlcNAc...) asparagine" evidence="4">
    <location>
        <position position="163"/>
    </location>
</feature>
<feature type="glycosylation site" description="N-linked (GlcNAc...) asparagine" evidence="4">
    <location>
        <position position="179"/>
    </location>
</feature>
<feature type="glycosylation site" description="N-linked (GlcNAc...) asparagine" evidence="4">
    <location>
        <position position="186"/>
    </location>
</feature>
<feature type="glycosylation site" description="N-linked (GlcNAc...) asparagine" evidence="4">
    <location>
        <position position="190"/>
    </location>
</feature>
<evidence type="ECO:0000250" key="1">
    <source>
        <dbReference type="UniProtKB" id="O35316"/>
    </source>
</evidence>
<evidence type="ECO:0000250" key="2">
    <source>
        <dbReference type="UniProtKB" id="P31641"/>
    </source>
</evidence>
<evidence type="ECO:0000250" key="3">
    <source>
        <dbReference type="UniProtKB" id="Q00589"/>
    </source>
</evidence>
<evidence type="ECO:0000255" key="4"/>
<evidence type="ECO:0000256" key="5">
    <source>
        <dbReference type="SAM" id="MobiDB-lite"/>
    </source>
</evidence>
<evidence type="ECO:0000269" key="6">
    <source>
    </source>
</evidence>
<evidence type="ECO:0000305" key="7"/>
<reference key="1">
    <citation type="journal article" date="2000" name="Biochim. Biophys. Acta">
        <title>Molecular characterization of taurine transport in bovine aortic endothelial cells.</title>
        <authorList>
            <person name="Qian X."/>
            <person name="Vinnakota S."/>
            <person name="Edwards C."/>
            <person name="Sarkar H.K."/>
        </authorList>
    </citation>
    <scope>NUCLEOTIDE SEQUENCE [MRNA]</scope>
    <scope>FUNCTION</scope>
    <scope>TRANSPORTER ACTIVITY</scope>
    <scope>BIOPHYSICOCHEMICAL PROPERTIES</scope>
</reference>
<comment type="function">
    <text evidence="1 6">Mediates sodium- and chloride-dependent transport of taurine (PubMed:11118543). Can also mediate transport of beta-alanine, hypotaurine and gamma-aminobutyric acid (GABA) (By similarity).</text>
</comment>
<comment type="catalytic activity">
    <reaction evidence="1">
        <text>4-aminobutanoate(out) + chloride(out) + 2 Na(+)(out) = 4-aminobutanoate(in) + chloride(in) + 2 Na(+)(in)</text>
        <dbReference type="Rhea" id="RHEA:70687"/>
        <dbReference type="ChEBI" id="CHEBI:17996"/>
        <dbReference type="ChEBI" id="CHEBI:29101"/>
        <dbReference type="ChEBI" id="CHEBI:59888"/>
    </reaction>
    <physiologicalReaction direction="left-to-right" evidence="1">
        <dbReference type="Rhea" id="RHEA:70688"/>
    </physiologicalReaction>
</comment>
<comment type="catalytic activity">
    <reaction evidence="6">
        <text>taurine(out) + chloride(out) + 2 Na(+)(out) = taurine(in) + chloride(in) + 2 Na(+)(in)</text>
        <dbReference type="Rhea" id="RHEA:71223"/>
        <dbReference type="ChEBI" id="CHEBI:17996"/>
        <dbReference type="ChEBI" id="CHEBI:29101"/>
        <dbReference type="ChEBI" id="CHEBI:507393"/>
    </reaction>
    <physiologicalReaction direction="left-to-right" evidence="6">
        <dbReference type="Rhea" id="RHEA:71224"/>
    </physiologicalReaction>
</comment>
<comment type="catalytic activity">
    <reaction evidence="1">
        <text>beta-alanine(out) + chloride(out) + 2 Na(+)(out) = beta-alanine(in) + chloride(in) + 2 Na(+)(in)</text>
        <dbReference type="Rhea" id="RHEA:71247"/>
        <dbReference type="ChEBI" id="CHEBI:17996"/>
        <dbReference type="ChEBI" id="CHEBI:29101"/>
        <dbReference type="ChEBI" id="CHEBI:57966"/>
    </reaction>
    <physiologicalReaction direction="left-to-right" evidence="1">
        <dbReference type="Rhea" id="RHEA:71248"/>
    </physiologicalReaction>
</comment>
<comment type="catalytic activity">
    <reaction evidence="1">
        <text>hypotaurine(out) + chloride(out) + 2 Na(+)(out) = hypotaurine(in) + chloride(in) + 2 Na(+)(in)</text>
        <dbReference type="Rhea" id="RHEA:71243"/>
        <dbReference type="ChEBI" id="CHEBI:17996"/>
        <dbReference type="ChEBI" id="CHEBI:29101"/>
        <dbReference type="ChEBI" id="CHEBI:57853"/>
    </reaction>
    <physiologicalReaction direction="left-to-right" evidence="1">
        <dbReference type="Rhea" id="RHEA:71244"/>
    </physiologicalReaction>
</comment>
<comment type="activity regulation">
    <text evidence="6">Taurine transport activity is inhibited by L-alanine, guanidinoethane sulfonate, homotaurine and phorbol 12-myristate 13-acetate (PubMed:11118543). Taurine transport activity is stimulated by hypertonic stress (PubMed:11118543).</text>
</comment>
<comment type="biophysicochemical properties">
    <kinetics>
        <KM evidence="6">3 uM for taurine</KM>
        <Vmax evidence="6">24.9 pmol/min/mg enzyme for taurine</Vmax>
    </kinetics>
</comment>
<comment type="subcellular location">
    <subcellularLocation>
        <location evidence="2">Cell membrane</location>
        <topology evidence="4">Multi-pass membrane protein</topology>
    </subcellularLocation>
</comment>
<comment type="PTM">
    <text evidence="3">Taurine transport activity is down-regulated upon Ser-322 phosphorylation.</text>
</comment>
<comment type="similarity">
    <text evidence="7">Belongs to the sodium:neurotransmitter symporter (SNF) (TC 2.A.22) family. SLC6A6 subfamily.</text>
</comment>
<accession>Q9MZ34</accession>